<keyword id="KW-0963">Cytoplasm</keyword>
<keyword id="KW-0350">Heme biosynthesis</keyword>
<keyword id="KW-0408">Iron</keyword>
<keyword id="KW-0456">Lyase</keyword>
<keyword id="KW-0479">Metal-binding</keyword>
<keyword id="KW-0627">Porphyrin biosynthesis</keyword>
<name>HEMH_BURA4</name>
<reference key="1">
    <citation type="submission" date="2008-04" db="EMBL/GenBank/DDBJ databases">
        <title>Complete sequence of chromosome 1 of Burkholderia ambifaria MC40-6.</title>
        <authorList>
            <person name="Copeland A."/>
            <person name="Lucas S."/>
            <person name="Lapidus A."/>
            <person name="Glavina del Rio T."/>
            <person name="Dalin E."/>
            <person name="Tice H."/>
            <person name="Pitluck S."/>
            <person name="Chain P."/>
            <person name="Malfatti S."/>
            <person name="Shin M."/>
            <person name="Vergez L."/>
            <person name="Lang D."/>
            <person name="Schmutz J."/>
            <person name="Larimer F."/>
            <person name="Land M."/>
            <person name="Hauser L."/>
            <person name="Kyrpides N."/>
            <person name="Lykidis A."/>
            <person name="Ramette A."/>
            <person name="Konstantinidis K."/>
            <person name="Tiedje J."/>
            <person name="Richardson P."/>
        </authorList>
    </citation>
    <scope>NUCLEOTIDE SEQUENCE [LARGE SCALE GENOMIC DNA]</scope>
    <source>
        <strain>MC40-6</strain>
    </source>
</reference>
<organism>
    <name type="scientific">Burkholderia ambifaria (strain MC40-6)</name>
    <dbReference type="NCBI Taxonomy" id="398577"/>
    <lineage>
        <taxon>Bacteria</taxon>
        <taxon>Pseudomonadati</taxon>
        <taxon>Pseudomonadota</taxon>
        <taxon>Betaproteobacteria</taxon>
        <taxon>Burkholderiales</taxon>
        <taxon>Burkholderiaceae</taxon>
        <taxon>Burkholderia</taxon>
        <taxon>Burkholderia cepacia complex</taxon>
    </lineage>
</organism>
<feature type="chain" id="PRO_1000116032" description="Ferrochelatase">
    <location>
        <begin position="1"/>
        <end position="354"/>
    </location>
</feature>
<feature type="binding site" evidence="1">
    <location>
        <position position="214"/>
    </location>
    <ligand>
        <name>Fe cation</name>
        <dbReference type="ChEBI" id="CHEBI:24875"/>
    </ligand>
</feature>
<feature type="binding site" evidence="1">
    <location>
        <position position="295"/>
    </location>
    <ligand>
        <name>Fe cation</name>
        <dbReference type="ChEBI" id="CHEBI:24875"/>
    </ligand>
</feature>
<protein>
    <recommendedName>
        <fullName evidence="1">Ferrochelatase</fullName>
        <ecNumber evidence="1">4.98.1.1</ecNumber>
    </recommendedName>
    <alternativeName>
        <fullName evidence="1">Heme synthase</fullName>
    </alternativeName>
    <alternativeName>
        <fullName evidence="1">Protoheme ferro-lyase</fullName>
    </alternativeName>
</protein>
<gene>
    <name evidence="1" type="primary">hemH</name>
    <name type="ordered locus">BamMC406_0664</name>
</gene>
<sequence>MRFDLEPPSSVAAAHRTGVLLINLGTPDAPTPRAVRRYLAEFLSDPRVVEIPQVVWQVLLRTLILPLRGRASAKKYAAVWMPEGSPLRVYTERQTEGVRHLLASNAYQVTVDYAMRYGSPNIAQALAQFKRAGVERVLLMPMYPQYSASTTATAFDAAFAALARMRNQPEVRTVRQYADHPAYIHALAEQVRQYWAQHGRPDFAAGDKLVLSFHGVPKRTLDLGDPYHDQCQQTGALLMAALGLSTLECRVTFQSRFGKAEWLQPYTAPTLRELGAAGVRRADVFCPGFTADCLETIEEIGMEVRDEFIAGGGQAFHRIPCLNGAHAWIGALGEIVAENLQGWPVKAAQPEMVN</sequence>
<comment type="function">
    <text evidence="1">Catalyzes the ferrous insertion into protoporphyrin IX.</text>
</comment>
<comment type="catalytic activity">
    <reaction evidence="1">
        <text>heme b + 2 H(+) = protoporphyrin IX + Fe(2+)</text>
        <dbReference type="Rhea" id="RHEA:22584"/>
        <dbReference type="ChEBI" id="CHEBI:15378"/>
        <dbReference type="ChEBI" id="CHEBI:29033"/>
        <dbReference type="ChEBI" id="CHEBI:57306"/>
        <dbReference type="ChEBI" id="CHEBI:60344"/>
        <dbReference type="EC" id="4.98.1.1"/>
    </reaction>
</comment>
<comment type="pathway">
    <text evidence="1">Porphyrin-containing compound metabolism; protoheme biosynthesis; protoheme from protoporphyrin-IX: step 1/1.</text>
</comment>
<comment type="subcellular location">
    <subcellularLocation>
        <location evidence="1">Cytoplasm</location>
    </subcellularLocation>
</comment>
<comment type="similarity">
    <text evidence="1">Belongs to the ferrochelatase family.</text>
</comment>
<proteinExistence type="inferred from homology"/>
<evidence type="ECO:0000255" key="1">
    <source>
        <dbReference type="HAMAP-Rule" id="MF_00323"/>
    </source>
</evidence>
<accession>B1YTJ5</accession>
<dbReference type="EC" id="4.98.1.1" evidence="1"/>
<dbReference type="EMBL" id="CP001025">
    <property type="protein sequence ID" value="ACB63160.1"/>
    <property type="molecule type" value="Genomic_DNA"/>
</dbReference>
<dbReference type="RefSeq" id="WP_012363150.1">
    <property type="nucleotide sequence ID" value="NC_010551.1"/>
</dbReference>
<dbReference type="SMR" id="B1YTJ5"/>
<dbReference type="KEGG" id="bac:BamMC406_0664"/>
<dbReference type="HOGENOM" id="CLU_018884_0_0_4"/>
<dbReference type="OrthoDB" id="9809741at2"/>
<dbReference type="UniPathway" id="UPA00252">
    <property type="reaction ID" value="UER00325"/>
</dbReference>
<dbReference type="Proteomes" id="UP000001680">
    <property type="component" value="Chromosome 1"/>
</dbReference>
<dbReference type="GO" id="GO:0005737">
    <property type="term" value="C:cytoplasm"/>
    <property type="evidence" value="ECO:0007669"/>
    <property type="project" value="UniProtKB-SubCell"/>
</dbReference>
<dbReference type="GO" id="GO:0004325">
    <property type="term" value="F:ferrochelatase activity"/>
    <property type="evidence" value="ECO:0007669"/>
    <property type="project" value="UniProtKB-UniRule"/>
</dbReference>
<dbReference type="GO" id="GO:0046872">
    <property type="term" value="F:metal ion binding"/>
    <property type="evidence" value="ECO:0007669"/>
    <property type="project" value="UniProtKB-KW"/>
</dbReference>
<dbReference type="GO" id="GO:0006783">
    <property type="term" value="P:heme biosynthetic process"/>
    <property type="evidence" value="ECO:0007669"/>
    <property type="project" value="UniProtKB-UniRule"/>
</dbReference>
<dbReference type="CDD" id="cd00419">
    <property type="entry name" value="Ferrochelatase_C"/>
    <property type="match status" value="1"/>
</dbReference>
<dbReference type="CDD" id="cd03411">
    <property type="entry name" value="Ferrochelatase_N"/>
    <property type="match status" value="1"/>
</dbReference>
<dbReference type="FunFam" id="3.40.50.1400:FF:000002">
    <property type="entry name" value="Ferrochelatase"/>
    <property type="match status" value="1"/>
</dbReference>
<dbReference type="Gene3D" id="3.40.50.1400">
    <property type="match status" value="2"/>
</dbReference>
<dbReference type="HAMAP" id="MF_00323">
    <property type="entry name" value="Ferrochelatase"/>
    <property type="match status" value="1"/>
</dbReference>
<dbReference type="InterPro" id="IPR001015">
    <property type="entry name" value="Ferrochelatase"/>
</dbReference>
<dbReference type="InterPro" id="IPR019772">
    <property type="entry name" value="Ferrochelatase_AS"/>
</dbReference>
<dbReference type="InterPro" id="IPR033644">
    <property type="entry name" value="Ferrochelatase_C"/>
</dbReference>
<dbReference type="InterPro" id="IPR033659">
    <property type="entry name" value="Ferrochelatase_N"/>
</dbReference>
<dbReference type="NCBIfam" id="TIGR00109">
    <property type="entry name" value="hemH"/>
    <property type="match status" value="1"/>
</dbReference>
<dbReference type="PANTHER" id="PTHR11108">
    <property type="entry name" value="FERROCHELATASE"/>
    <property type="match status" value="1"/>
</dbReference>
<dbReference type="PANTHER" id="PTHR11108:SF1">
    <property type="entry name" value="FERROCHELATASE, MITOCHONDRIAL"/>
    <property type="match status" value="1"/>
</dbReference>
<dbReference type="Pfam" id="PF00762">
    <property type="entry name" value="Ferrochelatase"/>
    <property type="match status" value="1"/>
</dbReference>
<dbReference type="SUPFAM" id="SSF53800">
    <property type="entry name" value="Chelatase"/>
    <property type="match status" value="1"/>
</dbReference>
<dbReference type="PROSITE" id="PS00534">
    <property type="entry name" value="FERROCHELATASE"/>
    <property type="match status" value="1"/>
</dbReference>